<comment type="function">
    <text evidence="1">Part of the Sec protein translocase complex. Interacts with the SecYEG preprotein conducting channel. Has a central role in coupling the hydrolysis of ATP to the transfer of proteins into and across the cell membrane, serving as an ATP-driven molecular motor driving the stepwise translocation of polypeptide chains across the membrane.</text>
</comment>
<comment type="catalytic activity">
    <reaction evidence="1">
        <text>ATP + H2O + cellular proteinSide 1 = ADP + phosphate + cellular proteinSide 2.</text>
        <dbReference type="EC" id="7.4.2.8"/>
    </reaction>
</comment>
<comment type="cofactor">
    <cofactor evidence="1">
        <name>Zn(2+)</name>
        <dbReference type="ChEBI" id="CHEBI:29105"/>
    </cofactor>
    <text evidence="1">May bind 1 zinc ion per subunit.</text>
</comment>
<comment type="subunit">
    <text evidence="1">Monomer and homodimer. Part of the essential Sec protein translocation apparatus which comprises SecA, SecYEG and auxiliary proteins SecDF. Other proteins may also be involved.</text>
</comment>
<comment type="subcellular location">
    <subcellularLocation>
        <location evidence="1">Cell membrane</location>
        <topology evidence="1">Peripheral membrane protein</topology>
        <orientation evidence="1">Cytoplasmic side</orientation>
    </subcellularLocation>
    <subcellularLocation>
        <location evidence="1">Cytoplasm</location>
    </subcellularLocation>
    <text evidence="1">Distribution is 50-50.</text>
</comment>
<comment type="similarity">
    <text evidence="1">Belongs to the SecA family.</text>
</comment>
<proteinExistence type="inferred from homology"/>
<sequence>MLKFLKNLLDDNAREIKRLTARVEEINSLEPQMQKLSDEELRAKTGEFKERIARGESLDELLPEAFAVVREASRRVLGMRHFDVQLMGGIVLHEGKIAEMKTGEGKTLVATLPAYLNALTGRGVHIVTVNDYLARRDAEWMGKIYKFLGLSVGLVVHGMDYAEKKAAYLADITYGTNNEFGFDYLRDNMAIHPDQVVQRELYYAIIDEVDSILIDEARTPLIISGEAEKSTDLYYTFAKIVKQLVPGEDYTVDEKAHAVMPTEAGIHKVEKMLGIQNLYADEHMELTHHLNAALKAQALMKRDRDYVVKDGQVIIVDEFTGRLMFGRRYSDGLHQAIEAKEGVKIEQETQTLATITFQNYFRMYEKLAGMTGTAETEENEFRKIYNLSVVVIPTHKPMIRKDLPDVIFKTEKAKFKAIVEEVARRHQTGQPILIGTISIEKSEMLSEMLKKRGIPHQVLNAKYHEKEAEIVAQAGRLGAVTIATNMAGRGTDILLGGNPEFLALQELRKMGKTPEDDPELYRELLAKYKKITDEEHKKVVELGGLHIIGTERHESRRIDNQLRGRAGRQGDPGSSQFFISLEDDLMRLFGSDNIAGLMDRLGLDEDTPIEHPLITRSIETAQKRVENRNFEIRKHVLEYDNVMNQQRELIYSQRRRVLFGEDVLTFVHQMIEAVVERAVDTYCPDGVHPEEWDLKGLLEYAHNVFLPNHQLTPEDLADTGKKALVEFLVEKAKEYYKKREEELGGEQLRELERYVILRVVDEKWMDHLDAMDQLREGIGLRAYGQKDPLVEYKIESVEMFNNMIAAIQEDVVRYLMRLSVVRQPETRRVRRVVENRYQEEGPKKPYRREQKIGRNDPCPCGSGKKYKKCCGRNG</sequence>
<dbReference type="EC" id="7.4.2.8" evidence="1"/>
<dbReference type="EMBL" id="CP000141">
    <property type="protein sequence ID" value="ABB15486.1"/>
    <property type="molecule type" value="Genomic_DNA"/>
</dbReference>
<dbReference type="RefSeq" id="WP_011343110.1">
    <property type="nucleotide sequence ID" value="NC_007503.1"/>
</dbReference>
<dbReference type="SMR" id="Q3AFQ0"/>
<dbReference type="FunCoup" id="Q3AFQ0">
    <property type="interactions" value="453"/>
</dbReference>
<dbReference type="STRING" id="246194.CHY_0162"/>
<dbReference type="KEGG" id="chy:CHY_0162"/>
<dbReference type="eggNOG" id="COG0653">
    <property type="taxonomic scope" value="Bacteria"/>
</dbReference>
<dbReference type="HOGENOM" id="CLU_005314_3_0_9"/>
<dbReference type="InParanoid" id="Q3AFQ0"/>
<dbReference type="OrthoDB" id="9805579at2"/>
<dbReference type="Proteomes" id="UP000002706">
    <property type="component" value="Chromosome"/>
</dbReference>
<dbReference type="GO" id="GO:0031522">
    <property type="term" value="C:cell envelope Sec protein transport complex"/>
    <property type="evidence" value="ECO:0007669"/>
    <property type="project" value="TreeGrafter"/>
</dbReference>
<dbReference type="GO" id="GO:0005829">
    <property type="term" value="C:cytosol"/>
    <property type="evidence" value="ECO:0007669"/>
    <property type="project" value="TreeGrafter"/>
</dbReference>
<dbReference type="GO" id="GO:0005886">
    <property type="term" value="C:plasma membrane"/>
    <property type="evidence" value="ECO:0007669"/>
    <property type="project" value="UniProtKB-SubCell"/>
</dbReference>
<dbReference type="GO" id="GO:0005524">
    <property type="term" value="F:ATP binding"/>
    <property type="evidence" value="ECO:0007669"/>
    <property type="project" value="UniProtKB-UniRule"/>
</dbReference>
<dbReference type="GO" id="GO:0046872">
    <property type="term" value="F:metal ion binding"/>
    <property type="evidence" value="ECO:0007669"/>
    <property type="project" value="UniProtKB-KW"/>
</dbReference>
<dbReference type="GO" id="GO:0008564">
    <property type="term" value="F:protein-exporting ATPase activity"/>
    <property type="evidence" value="ECO:0007669"/>
    <property type="project" value="UniProtKB-EC"/>
</dbReference>
<dbReference type="GO" id="GO:0065002">
    <property type="term" value="P:intracellular protein transmembrane transport"/>
    <property type="evidence" value="ECO:0007669"/>
    <property type="project" value="UniProtKB-UniRule"/>
</dbReference>
<dbReference type="GO" id="GO:0017038">
    <property type="term" value="P:protein import"/>
    <property type="evidence" value="ECO:0007669"/>
    <property type="project" value="InterPro"/>
</dbReference>
<dbReference type="GO" id="GO:0006605">
    <property type="term" value="P:protein targeting"/>
    <property type="evidence" value="ECO:0007669"/>
    <property type="project" value="UniProtKB-UniRule"/>
</dbReference>
<dbReference type="GO" id="GO:0043952">
    <property type="term" value="P:protein transport by the Sec complex"/>
    <property type="evidence" value="ECO:0007669"/>
    <property type="project" value="TreeGrafter"/>
</dbReference>
<dbReference type="CDD" id="cd17928">
    <property type="entry name" value="DEXDc_SecA"/>
    <property type="match status" value="1"/>
</dbReference>
<dbReference type="CDD" id="cd18803">
    <property type="entry name" value="SF2_C_secA"/>
    <property type="match status" value="1"/>
</dbReference>
<dbReference type="FunFam" id="1.10.3060.10:FF:000002">
    <property type="entry name" value="Preprotein translocase subunit SecA"/>
    <property type="match status" value="1"/>
</dbReference>
<dbReference type="FunFam" id="3.40.50.300:FF:000113">
    <property type="entry name" value="Preprotein translocase subunit SecA"/>
    <property type="match status" value="1"/>
</dbReference>
<dbReference type="FunFam" id="3.40.50.300:FF:000334">
    <property type="entry name" value="Protein translocase subunit SecA"/>
    <property type="match status" value="1"/>
</dbReference>
<dbReference type="FunFam" id="3.90.1440.10:FF:000002">
    <property type="entry name" value="Protein translocase subunit SecA"/>
    <property type="match status" value="1"/>
</dbReference>
<dbReference type="Gene3D" id="1.10.3060.10">
    <property type="entry name" value="Helical scaffold and wing domains of SecA"/>
    <property type="match status" value="1"/>
</dbReference>
<dbReference type="Gene3D" id="3.40.50.300">
    <property type="entry name" value="P-loop containing nucleotide triphosphate hydrolases"/>
    <property type="match status" value="2"/>
</dbReference>
<dbReference type="Gene3D" id="3.90.1440.10">
    <property type="entry name" value="SecA, preprotein cross-linking domain"/>
    <property type="match status" value="1"/>
</dbReference>
<dbReference type="HAMAP" id="MF_01382">
    <property type="entry name" value="SecA"/>
    <property type="match status" value="1"/>
</dbReference>
<dbReference type="InterPro" id="IPR014001">
    <property type="entry name" value="Helicase_ATP-bd"/>
</dbReference>
<dbReference type="InterPro" id="IPR001650">
    <property type="entry name" value="Helicase_C-like"/>
</dbReference>
<dbReference type="InterPro" id="IPR027417">
    <property type="entry name" value="P-loop_NTPase"/>
</dbReference>
<dbReference type="InterPro" id="IPR004027">
    <property type="entry name" value="SEC_C_motif"/>
</dbReference>
<dbReference type="InterPro" id="IPR000185">
    <property type="entry name" value="SecA"/>
</dbReference>
<dbReference type="InterPro" id="IPR020937">
    <property type="entry name" value="SecA_CS"/>
</dbReference>
<dbReference type="InterPro" id="IPR011115">
    <property type="entry name" value="SecA_DEAD"/>
</dbReference>
<dbReference type="InterPro" id="IPR014018">
    <property type="entry name" value="SecA_motor_DEAD"/>
</dbReference>
<dbReference type="InterPro" id="IPR011130">
    <property type="entry name" value="SecA_preprotein_X-link_dom"/>
</dbReference>
<dbReference type="InterPro" id="IPR044722">
    <property type="entry name" value="SecA_SF2_C"/>
</dbReference>
<dbReference type="InterPro" id="IPR011116">
    <property type="entry name" value="SecA_Wing/Scaffold"/>
</dbReference>
<dbReference type="InterPro" id="IPR036266">
    <property type="entry name" value="SecA_Wing/Scaffold_sf"/>
</dbReference>
<dbReference type="InterPro" id="IPR036670">
    <property type="entry name" value="SecA_X-link_sf"/>
</dbReference>
<dbReference type="NCBIfam" id="NF009538">
    <property type="entry name" value="PRK12904.1"/>
    <property type="match status" value="1"/>
</dbReference>
<dbReference type="NCBIfam" id="TIGR00963">
    <property type="entry name" value="secA"/>
    <property type="match status" value="1"/>
</dbReference>
<dbReference type="PANTHER" id="PTHR30612:SF0">
    <property type="entry name" value="CHLOROPLAST PROTEIN-TRANSPORTING ATPASE"/>
    <property type="match status" value="1"/>
</dbReference>
<dbReference type="PANTHER" id="PTHR30612">
    <property type="entry name" value="SECA INNER MEMBRANE COMPONENT OF SEC PROTEIN SECRETION SYSTEM"/>
    <property type="match status" value="1"/>
</dbReference>
<dbReference type="Pfam" id="PF21090">
    <property type="entry name" value="P-loop_SecA"/>
    <property type="match status" value="1"/>
</dbReference>
<dbReference type="Pfam" id="PF02810">
    <property type="entry name" value="SEC-C"/>
    <property type="match status" value="1"/>
</dbReference>
<dbReference type="Pfam" id="PF07517">
    <property type="entry name" value="SecA_DEAD"/>
    <property type="match status" value="1"/>
</dbReference>
<dbReference type="Pfam" id="PF01043">
    <property type="entry name" value="SecA_PP_bind"/>
    <property type="match status" value="1"/>
</dbReference>
<dbReference type="Pfam" id="PF07516">
    <property type="entry name" value="SecA_SW"/>
    <property type="match status" value="1"/>
</dbReference>
<dbReference type="PRINTS" id="PR00906">
    <property type="entry name" value="SECA"/>
</dbReference>
<dbReference type="SMART" id="SM00957">
    <property type="entry name" value="SecA_DEAD"/>
    <property type="match status" value="1"/>
</dbReference>
<dbReference type="SMART" id="SM00958">
    <property type="entry name" value="SecA_PP_bind"/>
    <property type="match status" value="1"/>
</dbReference>
<dbReference type="SUPFAM" id="SSF81886">
    <property type="entry name" value="Helical scaffold and wing domains of SecA"/>
    <property type="match status" value="1"/>
</dbReference>
<dbReference type="SUPFAM" id="SSF52540">
    <property type="entry name" value="P-loop containing nucleoside triphosphate hydrolases"/>
    <property type="match status" value="2"/>
</dbReference>
<dbReference type="SUPFAM" id="SSF81767">
    <property type="entry name" value="Pre-protein crosslinking domain of SecA"/>
    <property type="match status" value="1"/>
</dbReference>
<dbReference type="PROSITE" id="PS01312">
    <property type="entry name" value="SECA"/>
    <property type="match status" value="1"/>
</dbReference>
<dbReference type="PROSITE" id="PS51196">
    <property type="entry name" value="SECA_MOTOR_DEAD"/>
    <property type="match status" value="1"/>
</dbReference>
<protein>
    <recommendedName>
        <fullName evidence="1">Protein translocase subunit SecA</fullName>
        <ecNumber evidence="1">7.4.2.8</ecNumber>
    </recommendedName>
</protein>
<accession>Q3AFQ0</accession>
<gene>
    <name evidence="1" type="primary">secA</name>
    <name type="ordered locus">CHY_0162</name>
</gene>
<organism>
    <name type="scientific">Carboxydothermus hydrogenoformans (strain ATCC BAA-161 / DSM 6008 / Z-2901)</name>
    <dbReference type="NCBI Taxonomy" id="246194"/>
    <lineage>
        <taxon>Bacteria</taxon>
        <taxon>Bacillati</taxon>
        <taxon>Bacillota</taxon>
        <taxon>Clostridia</taxon>
        <taxon>Thermoanaerobacterales</taxon>
        <taxon>Thermoanaerobacteraceae</taxon>
        <taxon>Carboxydothermus</taxon>
    </lineage>
</organism>
<keyword id="KW-0067">ATP-binding</keyword>
<keyword id="KW-1003">Cell membrane</keyword>
<keyword id="KW-0963">Cytoplasm</keyword>
<keyword id="KW-0472">Membrane</keyword>
<keyword id="KW-0479">Metal-binding</keyword>
<keyword id="KW-0547">Nucleotide-binding</keyword>
<keyword id="KW-0653">Protein transport</keyword>
<keyword id="KW-1185">Reference proteome</keyword>
<keyword id="KW-1278">Translocase</keyword>
<keyword id="KW-0811">Translocation</keyword>
<keyword id="KW-0813">Transport</keyword>
<keyword id="KW-0862">Zinc</keyword>
<name>SECA_CARHZ</name>
<reference key="1">
    <citation type="journal article" date="2005" name="PLoS Genet.">
        <title>Life in hot carbon monoxide: the complete genome sequence of Carboxydothermus hydrogenoformans Z-2901.</title>
        <authorList>
            <person name="Wu M."/>
            <person name="Ren Q."/>
            <person name="Durkin A.S."/>
            <person name="Daugherty S.C."/>
            <person name="Brinkac L.M."/>
            <person name="Dodson R.J."/>
            <person name="Madupu R."/>
            <person name="Sullivan S.A."/>
            <person name="Kolonay J.F."/>
            <person name="Nelson W.C."/>
            <person name="Tallon L.J."/>
            <person name="Jones K.M."/>
            <person name="Ulrich L.E."/>
            <person name="Gonzalez J.M."/>
            <person name="Zhulin I.B."/>
            <person name="Robb F.T."/>
            <person name="Eisen J.A."/>
        </authorList>
    </citation>
    <scope>NUCLEOTIDE SEQUENCE [LARGE SCALE GENOMIC DNA]</scope>
    <source>
        <strain>ATCC BAA-161 / DSM 6008 / Z-2901</strain>
    </source>
</reference>
<feature type="chain" id="PRO_0000318332" description="Protein translocase subunit SecA">
    <location>
        <begin position="1"/>
        <end position="874"/>
    </location>
</feature>
<feature type="region of interest" description="Disordered" evidence="2">
    <location>
        <begin position="839"/>
        <end position="864"/>
    </location>
</feature>
<feature type="compositionally biased region" description="Basic and acidic residues" evidence="2">
    <location>
        <begin position="839"/>
        <end position="854"/>
    </location>
</feature>
<feature type="binding site" evidence="1">
    <location>
        <position position="85"/>
    </location>
    <ligand>
        <name>ATP</name>
        <dbReference type="ChEBI" id="CHEBI:30616"/>
    </ligand>
</feature>
<feature type="binding site" evidence="1">
    <location>
        <begin position="103"/>
        <end position="107"/>
    </location>
    <ligand>
        <name>ATP</name>
        <dbReference type="ChEBI" id="CHEBI:30616"/>
    </ligand>
</feature>
<feature type="binding site" evidence="1">
    <location>
        <position position="492"/>
    </location>
    <ligand>
        <name>ATP</name>
        <dbReference type="ChEBI" id="CHEBI:30616"/>
    </ligand>
</feature>
<feature type="binding site" evidence="1">
    <location>
        <position position="858"/>
    </location>
    <ligand>
        <name>Zn(2+)</name>
        <dbReference type="ChEBI" id="CHEBI:29105"/>
    </ligand>
</feature>
<feature type="binding site" evidence="1">
    <location>
        <position position="860"/>
    </location>
    <ligand>
        <name>Zn(2+)</name>
        <dbReference type="ChEBI" id="CHEBI:29105"/>
    </ligand>
</feature>
<feature type="binding site" evidence="1">
    <location>
        <position position="869"/>
    </location>
    <ligand>
        <name>Zn(2+)</name>
        <dbReference type="ChEBI" id="CHEBI:29105"/>
    </ligand>
</feature>
<feature type="binding site" evidence="1">
    <location>
        <position position="870"/>
    </location>
    <ligand>
        <name>Zn(2+)</name>
        <dbReference type="ChEBI" id="CHEBI:29105"/>
    </ligand>
</feature>
<evidence type="ECO:0000255" key="1">
    <source>
        <dbReference type="HAMAP-Rule" id="MF_01382"/>
    </source>
</evidence>
<evidence type="ECO:0000256" key="2">
    <source>
        <dbReference type="SAM" id="MobiDB-lite"/>
    </source>
</evidence>